<proteinExistence type="inferred from homology"/>
<sequence length="266" mass="28993">MDTFQVIILALIQGLTEFLPISSSAHLILPAQLLGWEDQGLSFDVAVNTGSLLAVVMYFRRELLSMFTAWTSSIVTGKQTQESKLSWWIILATIPAVIVGFSAKGFIETHFRSIEVIAATTIIFGLLLWWADKMQREGFNEFQVGWKKALVIGIAQAMALIPGTSRSGATITAALMLGLSREAAARFSFLMSVPVSLGAAILVTKDLLDSGQVIDYQALGLGIVVSFIAAYICIHYFLKIISKMGMTPFVVYRLALGAVLCGFIFL</sequence>
<organism>
    <name type="scientific">Shewanella halifaxensis (strain HAW-EB4)</name>
    <dbReference type="NCBI Taxonomy" id="458817"/>
    <lineage>
        <taxon>Bacteria</taxon>
        <taxon>Pseudomonadati</taxon>
        <taxon>Pseudomonadota</taxon>
        <taxon>Gammaproteobacteria</taxon>
        <taxon>Alteromonadales</taxon>
        <taxon>Shewanellaceae</taxon>
        <taxon>Shewanella</taxon>
    </lineage>
</organism>
<reference key="1">
    <citation type="submission" date="2008-01" db="EMBL/GenBank/DDBJ databases">
        <title>Complete sequence of Shewanella halifaxensis HAW-EB4.</title>
        <authorList>
            <consortium name="US DOE Joint Genome Institute"/>
            <person name="Copeland A."/>
            <person name="Lucas S."/>
            <person name="Lapidus A."/>
            <person name="Glavina del Rio T."/>
            <person name="Dalin E."/>
            <person name="Tice H."/>
            <person name="Bruce D."/>
            <person name="Goodwin L."/>
            <person name="Pitluck S."/>
            <person name="Sims D."/>
            <person name="Brettin T."/>
            <person name="Detter J.C."/>
            <person name="Han C."/>
            <person name="Kuske C.R."/>
            <person name="Schmutz J."/>
            <person name="Larimer F."/>
            <person name="Land M."/>
            <person name="Hauser L."/>
            <person name="Kyrpides N."/>
            <person name="Kim E."/>
            <person name="Zhao J.-S."/>
            <person name="Richardson P."/>
        </authorList>
    </citation>
    <scope>NUCLEOTIDE SEQUENCE [LARGE SCALE GENOMIC DNA]</scope>
    <source>
        <strain>HAW-EB4</strain>
    </source>
</reference>
<name>UPPP_SHEHH</name>
<accession>B0TIP2</accession>
<dbReference type="EC" id="3.6.1.27" evidence="1"/>
<dbReference type="EMBL" id="CP000931">
    <property type="protein sequence ID" value="ABZ75587.1"/>
    <property type="molecule type" value="Genomic_DNA"/>
</dbReference>
<dbReference type="RefSeq" id="WP_012276135.1">
    <property type="nucleotide sequence ID" value="NC_010334.1"/>
</dbReference>
<dbReference type="SMR" id="B0TIP2"/>
<dbReference type="STRING" id="458817.Shal_1013"/>
<dbReference type="KEGG" id="shl:Shal_1013"/>
<dbReference type="eggNOG" id="COG1968">
    <property type="taxonomic scope" value="Bacteria"/>
</dbReference>
<dbReference type="HOGENOM" id="CLU_060296_1_0_6"/>
<dbReference type="OrthoDB" id="9808289at2"/>
<dbReference type="Proteomes" id="UP000001317">
    <property type="component" value="Chromosome"/>
</dbReference>
<dbReference type="GO" id="GO:0005886">
    <property type="term" value="C:plasma membrane"/>
    <property type="evidence" value="ECO:0007669"/>
    <property type="project" value="UniProtKB-SubCell"/>
</dbReference>
<dbReference type="GO" id="GO:0050380">
    <property type="term" value="F:undecaprenyl-diphosphatase activity"/>
    <property type="evidence" value="ECO:0007669"/>
    <property type="project" value="UniProtKB-UniRule"/>
</dbReference>
<dbReference type="GO" id="GO:0071555">
    <property type="term" value="P:cell wall organization"/>
    <property type="evidence" value="ECO:0007669"/>
    <property type="project" value="UniProtKB-KW"/>
</dbReference>
<dbReference type="GO" id="GO:0009252">
    <property type="term" value="P:peptidoglycan biosynthetic process"/>
    <property type="evidence" value="ECO:0007669"/>
    <property type="project" value="UniProtKB-KW"/>
</dbReference>
<dbReference type="GO" id="GO:0008360">
    <property type="term" value="P:regulation of cell shape"/>
    <property type="evidence" value="ECO:0007669"/>
    <property type="project" value="UniProtKB-KW"/>
</dbReference>
<dbReference type="GO" id="GO:0046677">
    <property type="term" value="P:response to antibiotic"/>
    <property type="evidence" value="ECO:0007669"/>
    <property type="project" value="UniProtKB-UniRule"/>
</dbReference>
<dbReference type="HAMAP" id="MF_01006">
    <property type="entry name" value="Undec_diphosphatase"/>
    <property type="match status" value="1"/>
</dbReference>
<dbReference type="InterPro" id="IPR003824">
    <property type="entry name" value="UppP"/>
</dbReference>
<dbReference type="NCBIfam" id="NF001393">
    <property type="entry name" value="PRK00281.2-4"/>
    <property type="match status" value="1"/>
</dbReference>
<dbReference type="NCBIfam" id="TIGR00753">
    <property type="entry name" value="undec_PP_bacA"/>
    <property type="match status" value="1"/>
</dbReference>
<dbReference type="PANTHER" id="PTHR30622">
    <property type="entry name" value="UNDECAPRENYL-DIPHOSPHATASE"/>
    <property type="match status" value="1"/>
</dbReference>
<dbReference type="PANTHER" id="PTHR30622:SF4">
    <property type="entry name" value="UNDECAPRENYL-DIPHOSPHATASE"/>
    <property type="match status" value="1"/>
</dbReference>
<dbReference type="Pfam" id="PF02673">
    <property type="entry name" value="BacA"/>
    <property type="match status" value="1"/>
</dbReference>
<evidence type="ECO:0000255" key="1">
    <source>
        <dbReference type="HAMAP-Rule" id="MF_01006"/>
    </source>
</evidence>
<keyword id="KW-0046">Antibiotic resistance</keyword>
<keyword id="KW-0997">Cell inner membrane</keyword>
<keyword id="KW-1003">Cell membrane</keyword>
<keyword id="KW-0133">Cell shape</keyword>
<keyword id="KW-0961">Cell wall biogenesis/degradation</keyword>
<keyword id="KW-0378">Hydrolase</keyword>
<keyword id="KW-0472">Membrane</keyword>
<keyword id="KW-0573">Peptidoglycan synthesis</keyword>
<keyword id="KW-0812">Transmembrane</keyword>
<keyword id="KW-1133">Transmembrane helix</keyword>
<feature type="chain" id="PRO_1000083988" description="Undecaprenyl-diphosphatase">
    <location>
        <begin position="1"/>
        <end position="266"/>
    </location>
</feature>
<feature type="transmembrane region" description="Helical" evidence="1">
    <location>
        <begin position="1"/>
        <end position="21"/>
    </location>
</feature>
<feature type="transmembrane region" description="Helical" evidence="1">
    <location>
        <begin position="39"/>
        <end position="59"/>
    </location>
</feature>
<feature type="transmembrane region" description="Helical" evidence="1">
    <location>
        <begin position="87"/>
        <end position="107"/>
    </location>
</feature>
<feature type="transmembrane region" description="Helical" evidence="1">
    <location>
        <begin position="111"/>
        <end position="131"/>
    </location>
</feature>
<feature type="transmembrane region" description="Helical" evidence="1">
    <location>
        <begin position="144"/>
        <end position="164"/>
    </location>
</feature>
<feature type="transmembrane region" description="Helical" evidence="1">
    <location>
        <begin position="183"/>
        <end position="203"/>
    </location>
</feature>
<feature type="transmembrane region" description="Helical" evidence="1">
    <location>
        <begin position="218"/>
        <end position="238"/>
    </location>
</feature>
<feature type="transmembrane region" description="Helical" evidence="1">
    <location>
        <begin position="246"/>
        <end position="266"/>
    </location>
</feature>
<comment type="function">
    <text evidence="1">Catalyzes the dephosphorylation of undecaprenyl diphosphate (UPP). Confers resistance to bacitracin.</text>
</comment>
<comment type="catalytic activity">
    <reaction evidence="1">
        <text>di-trans,octa-cis-undecaprenyl diphosphate + H2O = di-trans,octa-cis-undecaprenyl phosphate + phosphate + H(+)</text>
        <dbReference type="Rhea" id="RHEA:28094"/>
        <dbReference type="ChEBI" id="CHEBI:15377"/>
        <dbReference type="ChEBI" id="CHEBI:15378"/>
        <dbReference type="ChEBI" id="CHEBI:43474"/>
        <dbReference type="ChEBI" id="CHEBI:58405"/>
        <dbReference type="ChEBI" id="CHEBI:60392"/>
        <dbReference type="EC" id="3.6.1.27"/>
    </reaction>
</comment>
<comment type="subcellular location">
    <subcellularLocation>
        <location evidence="1">Cell inner membrane</location>
        <topology evidence="1">Multi-pass membrane protein</topology>
    </subcellularLocation>
</comment>
<comment type="miscellaneous">
    <text>Bacitracin is thought to be involved in the inhibition of peptidoglycan synthesis by sequestering undecaprenyl diphosphate, thereby reducing the pool of lipid carrier available.</text>
</comment>
<comment type="similarity">
    <text evidence="1">Belongs to the UppP family.</text>
</comment>
<gene>
    <name evidence="1" type="primary">uppP</name>
    <name type="ordered locus">Shal_1013</name>
</gene>
<protein>
    <recommendedName>
        <fullName evidence="1">Undecaprenyl-diphosphatase</fullName>
        <ecNumber evidence="1">3.6.1.27</ecNumber>
    </recommendedName>
    <alternativeName>
        <fullName evidence="1">Bacitracin resistance protein</fullName>
    </alternativeName>
    <alternativeName>
        <fullName evidence="1">Undecaprenyl pyrophosphate phosphatase</fullName>
    </alternativeName>
</protein>